<protein>
    <recommendedName>
        <fullName evidence="1">Type III pantothenate kinase</fullName>
        <ecNumber evidence="1">2.7.1.33</ecNumber>
    </recommendedName>
    <alternativeName>
        <fullName evidence="1">PanK-III</fullName>
    </alternativeName>
    <alternativeName>
        <fullName evidence="1">Pantothenic acid kinase</fullName>
    </alternativeName>
</protein>
<name>COAX_GEOSL</name>
<keyword id="KW-0067">ATP-binding</keyword>
<keyword id="KW-0173">Coenzyme A biosynthesis</keyword>
<keyword id="KW-0963">Cytoplasm</keyword>
<keyword id="KW-0418">Kinase</keyword>
<keyword id="KW-0479">Metal-binding</keyword>
<keyword id="KW-0547">Nucleotide-binding</keyword>
<keyword id="KW-0630">Potassium</keyword>
<keyword id="KW-1185">Reference proteome</keyword>
<keyword id="KW-0808">Transferase</keyword>
<dbReference type="EC" id="2.7.1.33" evidence="1"/>
<dbReference type="EMBL" id="AE017180">
    <property type="protein sequence ID" value="AAR35310.1"/>
    <property type="molecule type" value="Genomic_DNA"/>
</dbReference>
<dbReference type="RefSeq" id="NP_952983.1">
    <property type="nucleotide sequence ID" value="NC_002939.5"/>
</dbReference>
<dbReference type="RefSeq" id="WP_010942579.1">
    <property type="nucleotide sequence ID" value="NC_002939.5"/>
</dbReference>
<dbReference type="SMR" id="Q74BU2"/>
<dbReference type="STRING" id="243231.GSU1934"/>
<dbReference type="EnsemblBacteria" id="AAR35310">
    <property type="protein sequence ID" value="AAR35310"/>
    <property type="gene ID" value="GSU1934"/>
</dbReference>
<dbReference type="KEGG" id="gsu:GSU1934"/>
<dbReference type="PATRIC" id="fig|243231.5.peg.1972"/>
<dbReference type="eggNOG" id="COG1521">
    <property type="taxonomic scope" value="Bacteria"/>
</dbReference>
<dbReference type="HOGENOM" id="CLU_066627_1_0_7"/>
<dbReference type="InParanoid" id="Q74BU2"/>
<dbReference type="OrthoDB" id="9804707at2"/>
<dbReference type="UniPathway" id="UPA00241">
    <property type="reaction ID" value="UER00352"/>
</dbReference>
<dbReference type="Proteomes" id="UP000000577">
    <property type="component" value="Chromosome"/>
</dbReference>
<dbReference type="GO" id="GO:0005737">
    <property type="term" value="C:cytoplasm"/>
    <property type="evidence" value="ECO:0007669"/>
    <property type="project" value="UniProtKB-SubCell"/>
</dbReference>
<dbReference type="GO" id="GO:0005524">
    <property type="term" value="F:ATP binding"/>
    <property type="evidence" value="ECO:0007669"/>
    <property type="project" value="UniProtKB-UniRule"/>
</dbReference>
<dbReference type="GO" id="GO:0046872">
    <property type="term" value="F:metal ion binding"/>
    <property type="evidence" value="ECO:0007669"/>
    <property type="project" value="UniProtKB-KW"/>
</dbReference>
<dbReference type="GO" id="GO:0004594">
    <property type="term" value="F:pantothenate kinase activity"/>
    <property type="evidence" value="ECO:0007669"/>
    <property type="project" value="UniProtKB-UniRule"/>
</dbReference>
<dbReference type="GO" id="GO:0015937">
    <property type="term" value="P:coenzyme A biosynthetic process"/>
    <property type="evidence" value="ECO:0007669"/>
    <property type="project" value="UniProtKB-UniRule"/>
</dbReference>
<dbReference type="CDD" id="cd24015">
    <property type="entry name" value="ASKHA_NBD_PanK-III"/>
    <property type="match status" value="1"/>
</dbReference>
<dbReference type="Gene3D" id="3.30.420.40">
    <property type="match status" value="2"/>
</dbReference>
<dbReference type="HAMAP" id="MF_01274">
    <property type="entry name" value="Pantothen_kinase_3"/>
    <property type="match status" value="1"/>
</dbReference>
<dbReference type="InterPro" id="IPR043129">
    <property type="entry name" value="ATPase_NBD"/>
</dbReference>
<dbReference type="InterPro" id="IPR004619">
    <property type="entry name" value="Type_III_PanK"/>
</dbReference>
<dbReference type="NCBIfam" id="TIGR00671">
    <property type="entry name" value="baf"/>
    <property type="match status" value="1"/>
</dbReference>
<dbReference type="NCBIfam" id="NF009847">
    <property type="entry name" value="PRK13318.1-5"/>
    <property type="match status" value="1"/>
</dbReference>
<dbReference type="NCBIfam" id="NF009848">
    <property type="entry name" value="PRK13318.1-6"/>
    <property type="match status" value="1"/>
</dbReference>
<dbReference type="NCBIfam" id="NF009855">
    <property type="entry name" value="PRK13321.1"/>
    <property type="match status" value="1"/>
</dbReference>
<dbReference type="PANTHER" id="PTHR34265">
    <property type="entry name" value="TYPE III PANTOTHENATE KINASE"/>
    <property type="match status" value="1"/>
</dbReference>
<dbReference type="PANTHER" id="PTHR34265:SF1">
    <property type="entry name" value="TYPE III PANTOTHENATE KINASE"/>
    <property type="match status" value="1"/>
</dbReference>
<dbReference type="Pfam" id="PF03309">
    <property type="entry name" value="Pan_kinase"/>
    <property type="match status" value="1"/>
</dbReference>
<dbReference type="SUPFAM" id="SSF53067">
    <property type="entry name" value="Actin-like ATPase domain"/>
    <property type="match status" value="2"/>
</dbReference>
<accession>Q74BU2</accession>
<feature type="chain" id="PRO_0000267541" description="Type III pantothenate kinase">
    <location>
        <begin position="1"/>
        <end position="255"/>
    </location>
</feature>
<feature type="active site" description="Proton acceptor" evidence="1">
    <location>
        <position position="109"/>
    </location>
</feature>
<feature type="binding site" evidence="1">
    <location>
        <begin position="6"/>
        <end position="13"/>
    </location>
    <ligand>
        <name>ATP</name>
        <dbReference type="ChEBI" id="CHEBI:30616"/>
    </ligand>
</feature>
<feature type="binding site" evidence="1">
    <location>
        <position position="100"/>
    </location>
    <ligand>
        <name>substrate</name>
    </ligand>
</feature>
<feature type="binding site" evidence="1">
    <location>
        <begin position="107"/>
        <end position="110"/>
    </location>
    <ligand>
        <name>substrate</name>
    </ligand>
</feature>
<feature type="binding site" evidence="1">
    <location>
        <position position="129"/>
    </location>
    <ligand>
        <name>K(+)</name>
        <dbReference type="ChEBI" id="CHEBI:29103"/>
    </ligand>
</feature>
<feature type="binding site" evidence="1">
    <location>
        <position position="132"/>
    </location>
    <ligand>
        <name>ATP</name>
        <dbReference type="ChEBI" id="CHEBI:30616"/>
    </ligand>
</feature>
<feature type="binding site" evidence="1">
    <location>
        <position position="184"/>
    </location>
    <ligand>
        <name>substrate</name>
    </ligand>
</feature>
<sequence length="255" mass="27972">MLLVIDVGNTNIVLGIYDGERLVRDWRVSTDKARTTDEYGILINELFRLAGLGLDQIRAVIISSVVPPLTGVLERLSLGYFGMRPLVVGPGIKTGMPIQYDNPREVGADRIVNAVAGYEKYRTSLIIVDFGTATTFDYVNRKGEYCGGAIAPGLVISTEALFQRASKLPRVDIIRPSAIIARNTVNSMQAGIYYGYVGLVDEIVTRMKAESKDAPRVIATGGLASLIAPESKTIEAVEEYLTLEGLRILYERNRE</sequence>
<organism>
    <name type="scientific">Geobacter sulfurreducens (strain ATCC 51573 / DSM 12127 / PCA)</name>
    <dbReference type="NCBI Taxonomy" id="243231"/>
    <lineage>
        <taxon>Bacteria</taxon>
        <taxon>Pseudomonadati</taxon>
        <taxon>Thermodesulfobacteriota</taxon>
        <taxon>Desulfuromonadia</taxon>
        <taxon>Geobacterales</taxon>
        <taxon>Geobacteraceae</taxon>
        <taxon>Geobacter</taxon>
    </lineage>
</organism>
<proteinExistence type="inferred from homology"/>
<gene>
    <name evidence="1" type="primary">coaX</name>
    <name type="ordered locus">GSU1934</name>
</gene>
<evidence type="ECO:0000255" key="1">
    <source>
        <dbReference type="HAMAP-Rule" id="MF_01274"/>
    </source>
</evidence>
<reference key="1">
    <citation type="journal article" date="2003" name="Science">
        <title>Genome of Geobacter sulfurreducens: metal reduction in subsurface environments.</title>
        <authorList>
            <person name="Methe B.A."/>
            <person name="Nelson K.E."/>
            <person name="Eisen J.A."/>
            <person name="Paulsen I.T."/>
            <person name="Nelson W.C."/>
            <person name="Heidelberg J.F."/>
            <person name="Wu D."/>
            <person name="Wu M."/>
            <person name="Ward N.L."/>
            <person name="Beanan M.J."/>
            <person name="Dodson R.J."/>
            <person name="Madupu R."/>
            <person name="Brinkac L.M."/>
            <person name="Daugherty S.C."/>
            <person name="DeBoy R.T."/>
            <person name="Durkin A.S."/>
            <person name="Gwinn M.L."/>
            <person name="Kolonay J.F."/>
            <person name="Sullivan S.A."/>
            <person name="Haft D.H."/>
            <person name="Selengut J."/>
            <person name="Davidsen T.M."/>
            <person name="Zafar N."/>
            <person name="White O."/>
            <person name="Tran B."/>
            <person name="Romero C."/>
            <person name="Forberger H.A."/>
            <person name="Weidman J.F."/>
            <person name="Khouri H.M."/>
            <person name="Feldblyum T.V."/>
            <person name="Utterback T.R."/>
            <person name="Van Aken S.E."/>
            <person name="Lovley D.R."/>
            <person name="Fraser C.M."/>
        </authorList>
    </citation>
    <scope>NUCLEOTIDE SEQUENCE [LARGE SCALE GENOMIC DNA]</scope>
    <source>
        <strain>ATCC 51573 / DSM 12127 / PCA</strain>
    </source>
</reference>
<comment type="function">
    <text evidence="1">Catalyzes the phosphorylation of pantothenate (Pan), the first step in CoA biosynthesis.</text>
</comment>
<comment type="catalytic activity">
    <reaction evidence="1">
        <text>(R)-pantothenate + ATP = (R)-4'-phosphopantothenate + ADP + H(+)</text>
        <dbReference type="Rhea" id="RHEA:16373"/>
        <dbReference type="ChEBI" id="CHEBI:10986"/>
        <dbReference type="ChEBI" id="CHEBI:15378"/>
        <dbReference type="ChEBI" id="CHEBI:29032"/>
        <dbReference type="ChEBI" id="CHEBI:30616"/>
        <dbReference type="ChEBI" id="CHEBI:456216"/>
        <dbReference type="EC" id="2.7.1.33"/>
    </reaction>
</comment>
<comment type="cofactor">
    <cofactor evidence="1">
        <name>NH4(+)</name>
        <dbReference type="ChEBI" id="CHEBI:28938"/>
    </cofactor>
    <cofactor evidence="1">
        <name>K(+)</name>
        <dbReference type="ChEBI" id="CHEBI:29103"/>
    </cofactor>
    <text evidence="1">A monovalent cation. Ammonium or potassium.</text>
</comment>
<comment type="pathway">
    <text evidence="1">Cofactor biosynthesis; coenzyme A biosynthesis; CoA from (R)-pantothenate: step 1/5.</text>
</comment>
<comment type="subunit">
    <text evidence="1">Homodimer.</text>
</comment>
<comment type="subcellular location">
    <subcellularLocation>
        <location evidence="1">Cytoplasm</location>
    </subcellularLocation>
</comment>
<comment type="similarity">
    <text evidence="1">Belongs to the type III pantothenate kinase family.</text>
</comment>